<accession>Q64NK5</accession>
<sequence length="158" mass="18175">MRKAKPKKRVILPDPVFNDQKVSKFVNHLMYDGKKNTSYEIFYAALETVKAKLPNEEKTALEIWKKALDNVTPQVEVKSRRVGGATFQVPTEIRPDRKESISMKNLILFARKRGGKSMADKLAAEIMDAFNEQGGAFKRKEDMHRMAEANRAFAHFRF</sequence>
<gene>
    <name evidence="1" type="primary">rpsG</name>
    <name type="ordered locus">BF4184</name>
</gene>
<keyword id="KW-0687">Ribonucleoprotein</keyword>
<keyword id="KW-0689">Ribosomal protein</keyword>
<keyword id="KW-0694">RNA-binding</keyword>
<keyword id="KW-0699">rRNA-binding</keyword>
<keyword id="KW-0820">tRNA-binding</keyword>
<evidence type="ECO:0000255" key="1">
    <source>
        <dbReference type="HAMAP-Rule" id="MF_00480"/>
    </source>
</evidence>
<evidence type="ECO:0000305" key="2"/>
<reference key="1">
    <citation type="journal article" date="2004" name="Proc. Natl. Acad. Sci. U.S.A.">
        <title>Genomic analysis of Bacteroides fragilis reveals extensive DNA inversions regulating cell surface adaptation.</title>
        <authorList>
            <person name="Kuwahara T."/>
            <person name="Yamashita A."/>
            <person name="Hirakawa H."/>
            <person name="Nakayama H."/>
            <person name="Toh H."/>
            <person name="Okada N."/>
            <person name="Kuhara S."/>
            <person name="Hattori M."/>
            <person name="Hayashi T."/>
            <person name="Ohnishi Y."/>
        </authorList>
    </citation>
    <scope>NUCLEOTIDE SEQUENCE [LARGE SCALE GENOMIC DNA]</scope>
    <source>
        <strain>YCH46</strain>
    </source>
</reference>
<organism>
    <name type="scientific">Bacteroides fragilis (strain YCH46)</name>
    <dbReference type="NCBI Taxonomy" id="295405"/>
    <lineage>
        <taxon>Bacteria</taxon>
        <taxon>Pseudomonadati</taxon>
        <taxon>Bacteroidota</taxon>
        <taxon>Bacteroidia</taxon>
        <taxon>Bacteroidales</taxon>
        <taxon>Bacteroidaceae</taxon>
        <taxon>Bacteroides</taxon>
    </lineage>
</organism>
<protein>
    <recommendedName>
        <fullName evidence="1">Small ribosomal subunit protein uS7</fullName>
    </recommendedName>
    <alternativeName>
        <fullName evidence="2">30S ribosomal protein S7</fullName>
    </alternativeName>
</protein>
<feature type="chain" id="PRO_0000124214" description="Small ribosomal subunit protein uS7">
    <location>
        <begin position="1"/>
        <end position="158"/>
    </location>
</feature>
<name>RS7_BACFR</name>
<comment type="function">
    <text evidence="1">One of the primary rRNA binding proteins, it binds directly to 16S rRNA where it nucleates assembly of the head domain of the 30S subunit. Is located at the subunit interface close to the decoding center, probably blocks exit of the E-site tRNA.</text>
</comment>
<comment type="subunit">
    <text evidence="1">Part of the 30S ribosomal subunit. Contacts proteins S9 and S11.</text>
</comment>
<comment type="similarity">
    <text evidence="1">Belongs to the universal ribosomal protein uS7 family.</text>
</comment>
<proteinExistence type="inferred from homology"/>
<dbReference type="EMBL" id="AP006841">
    <property type="protein sequence ID" value="BAD50927.1"/>
    <property type="molecule type" value="Genomic_DNA"/>
</dbReference>
<dbReference type="RefSeq" id="WP_005791536.1">
    <property type="nucleotide sequence ID" value="NZ_UYXF01000007.1"/>
</dbReference>
<dbReference type="RefSeq" id="YP_101461.1">
    <property type="nucleotide sequence ID" value="NC_006347.1"/>
</dbReference>
<dbReference type="SMR" id="Q64NK5"/>
<dbReference type="STRING" id="295405.BF4184"/>
<dbReference type="GeneID" id="93048771"/>
<dbReference type="KEGG" id="bfr:BF4184"/>
<dbReference type="PATRIC" id="fig|295405.11.peg.4038"/>
<dbReference type="HOGENOM" id="CLU_072226_1_1_10"/>
<dbReference type="OrthoDB" id="9807653at2"/>
<dbReference type="Proteomes" id="UP000002197">
    <property type="component" value="Chromosome"/>
</dbReference>
<dbReference type="GO" id="GO:0015935">
    <property type="term" value="C:small ribosomal subunit"/>
    <property type="evidence" value="ECO:0007669"/>
    <property type="project" value="InterPro"/>
</dbReference>
<dbReference type="GO" id="GO:0019843">
    <property type="term" value="F:rRNA binding"/>
    <property type="evidence" value="ECO:0007669"/>
    <property type="project" value="UniProtKB-UniRule"/>
</dbReference>
<dbReference type="GO" id="GO:0003735">
    <property type="term" value="F:structural constituent of ribosome"/>
    <property type="evidence" value="ECO:0007669"/>
    <property type="project" value="InterPro"/>
</dbReference>
<dbReference type="GO" id="GO:0000049">
    <property type="term" value="F:tRNA binding"/>
    <property type="evidence" value="ECO:0007669"/>
    <property type="project" value="UniProtKB-UniRule"/>
</dbReference>
<dbReference type="GO" id="GO:0006412">
    <property type="term" value="P:translation"/>
    <property type="evidence" value="ECO:0007669"/>
    <property type="project" value="UniProtKB-UniRule"/>
</dbReference>
<dbReference type="CDD" id="cd14869">
    <property type="entry name" value="uS7_Bacteria"/>
    <property type="match status" value="1"/>
</dbReference>
<dbReference type="FunFam" id="1.10.455.10:FF:000001">
    <property type="entry name" value="30S ribosomal protein S7"/>
    <property type="match status" value="1"/>
</dbReference>
<dbReference type="Gene3D" id="1.10.455.10">
    <property type="entry name" value="Ribosomal protein S7 domain"/>
    <property type="match status" value="1"/>
</dbReference>
<dbReference type="HAMAP" id="MF_00480_B">
    <property type="entry name" value="Ribosomal_uS7_B"/>
    <property type="match status" value="1"/>
</dbReference>
<dbReference type="InterPro" id="IPR000235">
    <property type="entry name" value="Ribosomal_uS7"/>
</dbReference>
<dbReference type="InterPro" id="IPR005717">
    <property type="entry name" value="Ribosomal_uS7_bac/org-type"/>
</dbReference>
<dbReference type="InterPro" id="IPR023798">
    <property type="entry name" value="Ribosomal_uS7_dom"/>
</dbReference>
<dbReference type="InterPro" id="IPR036823">
    <property type="entry name" value="Ribosomal_uS7_dom_sf"/>
</dbReference>
<dbReference type="NCBIfam" id="TIGR01029">
    <property type="entry name" value="rpsG_bact"/>
    <property type="match status" value="1"/>
</dbReference>
<dbReference type="PANTHER" id="PTHR11205">
    <property type="entry name" value="RIBOSOMAL PROTEIN S7"/>
    <property type="match status" value="1"/>
</dbReference>
<dbReference type="Pfam" id="PF00177">
    <property type="entry name" value="Ribosomal_S7"/>
    <property type="match status" value="1"/>
</dbReference>
<dbReference type="PIRSF" id="PIRSF002122">
    <property type="entry name" value="RPS7p_RPS7a_RPS5e_RPS7o"/>
    <property type="match status" value="1"/>
</dbReference>
<dbReference type="SUPFAM" id="SSF47973">
    <property type="entry name" value="Ribosomal protein S7"/>
    <property type="match status" value="1"/>
</dbReference>